<feature type="signal peptide" evidence="6">
    <location>
        <begin position="1"/>
        <end position="18"/>
    </location>
</feature>
<feature type="chain" id="PRO_5000144152" description="Tiggrin" evidence="6">
    <location>
        <begin position="19"/>
        <end position="2188"/>
    </location>
</feature>
<feature type="region of interest" description="Disordered" evidence="2">
    <location>
        <begin position="1984"/>
        <end position="2188"/>
    </location>
</feature>
<feature type="coiled-coil region" evidence="1">
    <location>
        <begin position="570"/>
        <end position="635"/>
    </location>
</feature>
<feature type="coiled-coil region" evidence="1">
    <location>
        <begin position="1009"/>
        <end position="1050"/>
    </location>
</feature>
<feature type="coiled-coil region" evidence="1">
    <location>
        <begin position="1312"/>
        <end position="1343"/>
    </location>
</feature>
<feature type="coiled-coil region" evidence="1">
    <location>
        <begin position="1613"/>
        <end position="1641"/>
    </location>
</feature>
<feature type="short sequence motif" description="Cell attachment site" evidence="7 8">
    <location>
        <begin position="1989"/>
        <end position="1991"/>
    </location>
</feature>
<feature type="compositionally biased region" description="Basic and acidic residues" evidence="2">
    <location>
        <begin position="1985"/>
        <end position="1998"/>
    </location>
</feature>
<feature type="compositionally biased region" description="Acidic residues" evidence="2">
    <location>
        <begin position="2000"/>
        <end position="2009"/>
    </location>
</feature>
<feature type="compositionally biased region" description="Pro residues" evidence="2">
    <location>
        <begin position="2016"/>
        <end position="2033"/>
    </location>
</feature>
<feature type="compositionally biased region" description="Low complexity" evidence="2">
    <location>
        <begin position="2057"/>
        <end position="2077"/>
    </location>
</feature>
<feature type="compositionally biased region" description="Low complexity" evidence="2">
    <location>
        <begin position="2091"/>
        <end position="2101"/>
    </location>
</feature>
<feature type="compositionally biased region" description="Polar residues" evidence="2">
    <location>
        <begin position="2115"/>
        <end position="2139"/>
    </location>
</feature>
<feature type="compositionally biased region" description="Low complexity" evidence="2">
    <location>
        <begin position="2148"/>
        <end position="2165"/>
    </location>
</feature>
<feature type="compositionally biased region" description="Basic and acidic residues" evidence="2">
    <location>
        <begin position="2179"/>
        <end position="2188"/>
    </location>
</feature>
<feature type="mutagenesis site" description="Partially rescues muscle function and structure defects in the null mutant. Fails to interact with alpha-PS2/beta-PS." evidence="7">
    <original>RGD</original>
    <variation>LGA</variation>
    <location>
        <begin position="1989"/>
        <end position="1991"/>
    </location>
</feature>
<feature type="sequence conflict" description="In Ref. 1; AAA56998." evidence="9" ref="1">
    <original>I</original>
    <variation>V</variation>
    <location>
        <position position="7"/>
    </location>
</feature>
<feature type="sequence conflict" description="In Ref. 1; AAA56998." evidence="9" ref="1">
    <original>A</original>
    <variation>G</variation>
    <location>
        <position position="77"/>
    </location>
</feature>
<feature type="sequence conflict" description="In Ref. 1; AAA56998." evidence="9" ref="1">
    <original>E</original>
    <variation>Q</variation>
    <location>
        <position position="381"/>
    </location>
</feature>
<feature type="sequence conflict" description="In Ref. 1; AAA56998." evidence="9" ref="1">
    <original>N</original>
    <variation>S</variation>
    <location>
        <position position="869"/>
    </location>
</feature>
<feature type="sequence conflict" description="In Ref. 1; AAA56998." evidence="9" ref="1">
    <location>
        <begin position="2157"/>
        <end position="2158"/>
    </location>
</feature>
<feature type="sequence conflict" description="In Ref. 1; AAA56998." evidence="9" ref="1">
    <original>E</original>
    <variation>G</variation>
    <location>
        <position position="2185"/>
    </location>
</feature>
<comment type="function">
    <text evidence="4 6 7 8">Functions as a ligand for integrin alpha-PS2/beta-PS. Required in larvae for proper muscle structure and function. Involved in the regulation of cell adhesion during wing development.</text>
</comment>
<comment type="subcellular location">
    <subcellularLocation>
        <location evidence="5 6">Secreted</location>
        <location evidence="5 6">Extracellular space</location>
        <location evidence="5 6">Extracellular matrix</location>
    </subcellularLocation>
    <text evidence="5 6">Localizes to the basal surface of the dorsoventral cell layer interface during pupal wing development.</text>
</comment>
<comment type="tissue specificity">
    <text evidence="3 4 5 6 7">In embryos, expressed in the apodemes (muscle attachment sites) of the major longitudinal muscles 4, 6, 7, 12 and 13 and the wide dorsal oblique muscles 9 and 10, in hemocytes, in fat body cells, in basement membranes surrounding the gut and in the commissures of the ventral nerve cord. Expressed in larval imaginal wing disk and in pupal wing. In adult flies, expressed in the jump muscle (at protein level).</text>
</comment>
<comment type="developmental stage">
    <text evidence="5 6">Expressed throughout embryogenesis; first appears at 8-10 hours. Detected in larval and pupal stages (at protein level). Transcripts are first detected at 6-8 hours of development, expression peaks at 12-14 hours and then declines by the end of embryogenesis.</text>
</comment>
<comment type="PTM">
    <text evidence="4 5">O-glycosylation by pgant3 is required for proper secretion and localization to the basal cell layer interface during wing development.</text>
</comment>
<comment type="disruption phenotype">
    <text evidence="3 7">Pupal lethal with about 1% escapers. In mutant larvae, muscles 6 and 7 appear stringy and not anchored to other muscles or the epidermis, often these muscles are missing or unrecognizable. Sites where muscles 3, 4, 5, 8 and 16 come together are rarely recognizable and large gaps between muscles 9 and 10 can be observed. Muscle contraction waves that transverse the length of the larvae and are responsible for locomotion are much slower in mutant larvae. Mutant pupae are longer than wild type pupae. Mutant adult flies present elongated abdomen and wings with altered shapes and sizes.</text>
</comment>
<comment type="sequence caution" evidence="9">
    <conflict type="frameshift">
        <sequence resource="EMBL-CDS" id="AAQ23578"/>
    </conflict>
</comment>
<dbReference type="EMBL" id="U09506">
    <property type="protein sequence ID" value="AAA56998.1"/>
    <property type="molecule type" value="mRNA"/>
</dbReference>
<dbReference type="EMBL" id="AE014134">
    <property type="protein sequence ID" value="AAF52380.2"/>
    <property type="molecule type" value="Genomic_DNA"/>
</dbReference>
<dbReference type="EMBL" id="BT010260">
    <property type="protein sequence ID" value="AAQ23578.1"/>
    <property type="status" value="ALT_FRAME"/>
    <property type="molecule type" value="mRNA"/>
</dbReference>
<dbReference type="RefSeq" id="NP_001285670.1">
    <property type="nucleotide sequence ID" value="NM_001298741.1"/>
</dbReference>
<dbReference type="RefSeq" id="NP_477033.1">
    <property type="nucleotide sequence ID" value="NM_057685.4"/>
</dbReference>
<dbReference type="SMR" id="Q9VMD9"/>
<dbReference type="BioGRID" id="60053">
    <property type="interactions" value="4"/>
</dbReference>
<dbReference type="FunCoup" id="Q9VMD9">
    <property type="interactions" value="50"/>
</dbReference>
<dbReference type="IntAct" id="Q9VMD9">
    <property type="interactions" value="12"/>
</dbReference>
<dbReference type="STRING" id="7227.FBpp0309850"/>
<dbReference type="GlyGen" id="Q9VMD9">
    <property type="glycosylation" value="2 sites, 1 O-linked glycan (1 site)"/>
</dbReference>
<dbReference type="PaxDb" id="7227-FBpp0078905"/>
<dbReference type="EnsemblMetazoa" id="FBtr0079275">
    <property type="protein sequence ID" value="FBpp0078905"/>
    <property type="gene ID" value="FBgn0011722"/>
</dbReference>
<dbReference type="EnsemblMetazoa" id="FBtr0343152">
    <property type="protein sequence ID" value="FBpp0309850"/>
    <property type="gene ID" value="FBgn0011722"/>
</dbReference>
<dbReference type="GeneID" id="33896"/>
<dbReference type="KEGG" id="dme:Dmel_CG11527"/>
<dbReference type="UCSC" id="CG11527-RA">
    <property type="organism name" value="d. melanogaster"/>
</dbReference>
<dbReference type="AGR" id="FB:FBgn0011722"/>
<dbReference type="CTD" id="33896"/>
<dbReference type="FlyBase" id="FBgn0011722">
    <property type="gene designation" value="Tig"/>
</dbReference>
<dbReference type="VEuPathDB" id="VectorBase:FBgn0011722"/>
<dbReference type="eggNOG" id="ENOG502S4BN">
    <property type="taxonomic scope" value="Eukaryota"/>
</dbReference>
<dbReference type="HOGENOM" id="CLU_231371_0_0_1"/>
<dbReference type="InParanoid" id="Q9VMD9"/>
<dbReference type="OMA" id="ERERFFW"/>
<dbReference type="OrthoDB" id="7986660at2759"/>
<dbReference type="PhylomeDB" id="Q9VMD9"/>
<dbReference type="SignaLink" id="Q9VMD9"/>
<dbReference type="BioGRID-ORCS" id="33896">
    <property type="hits" value="0 hits in 1 CRISPR screen"/>
</dbReference>
<dbReference type="GenomeRNAi" id="33896"/>
<dbReference type="PRO" id="PR:Q9VMD9"/>
<dbReference type="Proteomes" id="UP000000803">
    <property type="component" value="Chromosome 2L"/>
</dbReference>
<dbReference type="Bgee" id="FBgn0011722">
    <property type="expression patterns" value="Expressed in embryonic/larval hemocyte (Drosophila) and 66 other cell types or tissues"/>
</dbReference>
<dbReference type="ExpressionAtlas" id="Q9VMD9">
    <property type="expression patterns" value="baseline and differential"/>
</dbReference>
<dbReference type="GO" id="GO:0005604">
    <property type="term" value="C:basement membrane"/>
    <property type="evidence" value="ECO:0000314"/>
    <property type="project" value="FlyBase"/>
</dbReference>
<dbReference type="GO" id="GO:0031012">
    <property type="term" value="C:extracellular matrix"/>
    <property type="evidence" value="ECO:0000314"/>
    <property type="project" value="FlyBase"/>
</dbReference>
<dbReference type="GO" id="GO:0005576">
    <property type="term" value="C:extracellular region"/>
    <property type="evidence" value="ECO:0007669"/>
    <property type="project" value="UniProtKB-KW"/>
</dbReference>
<dbReference type="GO" id="GO:0005178">
    <property type="term" value="F:integrin binding"/>
    <property type="evidence" value="ECO:0000353"/>
    <property type="project" value="FlyBase"/>
</dbReference>
<dbReference type="GO" id="GO:0007411">
    <property type="term" value="P:axon guidance"/>
    <property type="evidence" value="ECO:0000315"/>
    <property type="project" value="FlyBase"/>
</dbReference>
<dbReference type="GO" id="GO:0033627">
    <property type="term" value="P:cell adhesion mediated by integrin"/>
    <property type="evidence" value="ECO:0000314"/>
    <property type="project" value="FlyBase"/>
</dbReference>
<dbReference type="GO" id="GO:0031589">
    <property type="term" value="P:cell-substrate adhesion"/>
    <property type="evidence" value="ECO:0000315"/>
    <property type="project" value="FlyBase"/>
</dbReference>
<dbReference type="GO" id="GO:0072499">
    <property type="term" value="P:photoreceptor cell axon guidance"/>
    <property type="evidence" value="ECO:0000315"/>
    <property type="project" value="FlyBase"/>
</dbReference>
<dbReference type="GO" id="GO:0033628">
    <property type="term" value="P:regulation of cell adhesion mediated by integrin"/>
    <property type="evidence" value="ECO:0000316"/>
    <property type="project" value="FlyBase"/>
</dbReference>
<dbReference type="GO" id="GO:0034446">
    <property type="term" value="P:substrate adhesion-dependent cell spreading"/>
    <property type="evidence" value="ECO:0000314"/>
    <property type="project" value="FlyBase"/>
</dbReference>
<dbReference type="InterPro" id="IPR016084">
    <property type="entry name" value="Haem_Oase-like_multi-hlx"/>
</dbReference>
<dbReference type="SUPFAM" id="SSF48613">
    <property type="entry name" value="Heme oxygenase-like"/>
    <property type="match status" value="1"/>
</dbReference>
<evidence type="ECO:0000255" key="1"/>
<evidence type="ECO:0000256" key="2">
    <source>
        <dbReference type="SAM" id="MobiDB-lite"/>
    </source>
</evidence>
<evidence type="ECO:0000269" key="3">
    <source>
    </source>
</evidence>
<evidence type="ECO:0000269" key="4">
    <source>
    </source>
</evidence>
<evidence type="ECO:0000269" key="5">
    <source>
    </source>
</evidence>
<evidence type="ECO:0000269" key="6">
    <source>
    </source>
</evidence>
<evidence type="ECO:0000269" key="7">
    <source>
    </source>
</evidence>
<evidence type="ECO:0000269" key="8">
    <source>
    </source>
</evidence>
<evidence type="ECO:0000305" key="9"/>
<evidence type="ECO:0000312" key="10">
    <source>
        <dbReference type="EMBL" id="AAA56998.1"/>
    </source>
</evidence>
<evidence type="ECO:0000312" key="11">
    <source>
        <dbReference type="EMBL" id="AAF52380.2"/>
    </source>
</evidence>
<evidence type="ECO:0000312" key="12">
    <source>
        <dbReference type="EMBL" id="AAQ23578.1"/>
    </source>
</evidence>
<evidence type="ECO:0000312" key="13">
    <source>
        <dbReference type="FlyBase" id="FBgn0011722"/>
    </source>
</evidence>
<proteinExistence type="evidence at protein level"/>
<reference evidence="9 10" key="1">
    <citation type="journal article" date="1994" name="Development">
        <title>Tiggrin, a novel Drosophila extracellular matrix protein that functions as a ligand for Drosophila alpha PS2 beta PS integrins.</title>
        <authorList>
            <person name="Fogerty F.J."/>
            <person name="Fessler L.I."/>
            <person name="Bunch T.A."/>
            <person name="Yaron Y."/>
            <person name="Parker C.G."/>
            <person name="Nelson R.E."/>
            <person name="Brower D.L."/>
            <person name="Gullberg D."/>
            <person name="Fessler J.H."/>
        </authorList>
    </citation>
    <scope>NUCLEOTIDE SEQUENCE [MRNA]</scope>
    <scope>PROTEIN SEQUENCE OF 19-25 AND 1476-1483</scope>
    <scope>FUNCTION</scope>
    <scope>SUBCELLULAR LOCATION</scope>
    <scope>TISSUE SPECIFICITY</scope>
    <scope>DEVELOPMENTAL STAGE</scope>
</reference>
<reference evidence="11" key="2">
    <citation type="journal article" date="2000" name="Science">
        <title>The genome sequence of Drosophila melanogaster.</title>
        <authorList>
            <person name="Adams M.D."/>
            <person name="Celniker S.E."/>
            <person name="Holt R.A."/>
            <person name="Evans C.A."/>
            <person name="Gocayne J.D."/>
            <person name="Amanatides P.G."/>
            <person name="Scherer S.E."/>
            <person name="Li P.W."/>
            <person name="Hoskins R.A."/>
            <person name="Galle R.F."/>
            <person name="George R.A."/>
            <person name="Lewis S.E."/>
            <person name="Richards S."/>
            <person name="Ashburner M."/>
            <person name="Henderson S.N."/>
            <person name="Sutton G.G."/>
            <person name="Wortman J.R."/>
            <person name="Yandell M.D."/>
            <person name="Zhang Q."/>
            <person name="Chen L.X."/>
            <person name="Brandon R.C."/>
            <person name="Rogers Y.-H.C."/>
            <person name="Blazej R.G."/>
            <person name="Champe M."/>
            <person name="Pfeiffer B.D."/>
            <person name="Wan K.H."/>
            <person name="Doyle C."/>
            <person name="Baxter E.G."/>
            <person name="Helt G."/>
            <person name="Nelson C.R."/>
            <person name="Miklos G.L.G."/>
            <person name="Abril J.F."/>
            <person name="Agbayani A."/>
            <person name="An H.-J."/>
            <person name="Andrews-Pfannkoch C."/>
            <person name="Baldwin D."/>
            <person name="Ballew R.M."/>
            <person name="Basu A."/>
            <person name="Baxendale J."/>
            <person name="Bayraktaroglu L."/>
            <person name="Beasley E.M."/>
            <person name="Beeson K.Y."/>
            <person name="Benos P.V."/>
            <person name="Berman B.P."/>
            <person name="Bhandari D."/>
            <person name="Bolshakov S."/>
            <person name="Borkova D."/>
            <person name="Botchan M.R."/>
            <person name="Bouck J."/>
            <person name="Brokstein P."/>
            <person name="Brottier P."/>
            <person name="Burtis K.C."/>
            <person name="Busam D.A."/>
            <person name="Butler H."/>
            <person name="Cadieu E."/>
            <person name="Center A."/>
            <person name="Chandra I."/>
            <person name="Cherry J.M."/>
            <person name="Cawley S."/>
            <person name="Dahlke C."/>
            <person name="Davenport L.B."/>
            <person name="Davies P."/>
            <person name="de Pablos B."/>
            <person name="Delcher A."/>
            <person name="Deng Z."/>
            <person name="Mays A.D."/>
            <person name="Dew I."/>
            <person name="Dietz S.M."/>
            <person name="Dodson K."/>
            <person name="Doup L.E."/>
            <person name="Downes M."/>
            <person name="Dugan-Rocha S."/>
            <person name="Dunkov B.C."/>
            <person name="Dunn P."/>
            <person name="Durbin K.J."/>
            <person name="Evangelista C.C."/>
            <person name="Ferraz C."/>
            <person name="Ferriera S."/>
            <person name="Fleischmann W."/>
            <person name="Fosler C."/>
            <person name="Gabrielian A.E."/>
            <person name="Garg N.S."/>
            <person name="Gelbart W.M."/>
            <person name="Glasser K."/>
            <person name="Glodek A."/>
            <person name="Gong F."/>
            <person name="Gorrell J.H."/>
            <person name="Gu Z."/>
            <person name="Guan P."/>
            <person name="Harris M."/>
            <person name="Harris N.L."/>
            <person name="Harvey D.A."/>
            <person name="Heiman T.J."/>
            <person name="Hernandez J.R."/>
            <person name="Houck J."/>
            <person name="Hostin D."/>
            <person name="Houston K.A."/>
            <person name="Howland T.J."/>
            <person name="Wei M.-H."/>
            <person name="Ibegwam C."/>
            <person name="Jalali M."/>
            <person name="Kalush F."/>
            <person name="Karpen G.H."/>
            <person name="Ke Z."/>
            <person name="Kennison J.A."/>
            <person name="Ketchum K.A."/>
            <person name="Kimmel B.E."/>
            <person name="Kodira C.D."/>
            <person name="Kraft C.L."/>
            <person name="Kravitz S."/>
            <person name="Kulp D."/>
            <person name="Lai Z."/>
            <person name="Lasko P."/>
            <person name="Lei Y."/>
            <person name="Levitsky A.A."/>
            <person name="Li J.H."/>
            <person name="Li Z."/>
            <person name="Liang Y."/>
            <person name="Lin X."/>
            <person name="Liu X."/>
            <person name="Mattei B."/>
            <person name="McIntosh T.C."/>
            <person name="McLeod M.P."/>
            <person name="McPherson D."/>
            <person name="Merkulov G."/>
            <person name="Milshina N.V."/>
            <person name="Mobarry C."/>
            <person name="Morris J."/>
            <person name="Moshrefi A."/>
            <person name="Mount S.M."/>
            <person name="Moy M."/>
            <person name="Murphy B."/>
            <person name="Murphy L."/>
            <person name="Muzny D.M."/>
            <person name="Nelson D.L."/>
            <person name="Nelson D.R."/>
            <person name="Nelson K.A."/>
            <person name="Nixon K."/>
            <person name="Nusskern D.R."/>
            <person name="Pacleb J.M."/>
            <person name="Palazzolo M."/>
            <person name="Pittman G.S."/>
            <person name="Pan S."/>
            <person name="Pollard J."/>
            <person name="Puri V."/>
            <person name="Reese M.G."/>
            <person name="Reinert K."/>
            <person name="Remington K."/>
            <person name="Saunders R.D.C."/>
            <person name="Scheeler F."/>
            <person name="Shen H."/>
            <person name="Shue B.C."/>
            <person name="Siden-Kiamos I."/>
            <person name="Simpson M."/>
            <person name="Skupski M.P."/>
            <person name="Smith T.J."/>
            <person name="Spier E."/>
            <person name="Spradling A.C."/>
            <person name="Stapleton M."/>
            <person name="Strong R."/>
            <person name="Sun E."/>
            <person name="Svirskas R."/>
            <person name="Tector C."/>
            <person name="Turner R."/>
            <person name="Venter E."/>
            <person name="Wang A.H."/>
            <person name="Wang X."/>
            <person name="Wang Z.-Y."/>
            <person name="Wassarman D.A."/>
            <person name="Weinstock G.M."/>
            <person name="Weissenbach J."/>
            <person name="Williams S.M."/>
            <person name="Woodage T."/>
            <person name="Worley K.C."/>
            <person name="Wu D."/>
            <person name="Yang S."/>
            <person name="Yao Q.A."/>
            <person name="Ye J."/>
            <person name="Yeh R.-F."/>
            <person name="Zaveri J.S."/>
            <person name="Zhan M."/>
            <person name="Zhang G."/>
            <person name="Zhao Q."/>
            <person name="Zheng L."/>
            <person name="Zheng X.H."/>
            <person name="Zhong F.N."/>
            <person name="Zhong W."/>
            <person name="Zhou X."/>
            <person name="Zhu S.C."/>
            <person name="Zhu X."/>
            <person name="Smith H.O."/>
            <person name="Gibbs R.A."/>
            <person name="Myers E.W."/>
            <person name="Rubin G.M."/>
            <person name="Venter J.C."/>
        </authorList>
    </citation>
    <scope>NUCLEOTIDE SEQUENCE [LARGE SCALE GENOMIC DNA]</scope>
    <source>
        <strain>Berkeley</strain>
    </source>
</reference>
<reference evidence="11" key="3">
    <citation type="journal article" date="2002" name="Genome Biol.">
        <title>Annotation of the Drosophila melanogaster euchromatic genome: a systematic review.</title>
        <authorList>
            <person name="Misra S."/>
            <person name="Crosby M.A."/>
            <person name="Mungall C.J."/>
            <person name="Matthews B.B."/>
            <person name="Campbell K.S."/>
            <person name="Hradecky P."/>
            <person name="Huang Y."/>
            <person name="Kaminker J.S."/>
            <person name="Millburn G.H."/>
            <person name="Prochnik S.E."/>
            <person name="Smith C.D."/>
            <person name="Tupy J.L."/>
            <person name="Whitfield E.J."/>
            <person name="Bayraktaroglu L."/>
            <person name="Berman B.P."/>
            <person name="Bettencourt B.R."/>
            <person name="Celniker S.E."/>
            <person name="de Grey A.D.N.J."/>
            <person name="Drysdale R.A."/>
            <person name="Harris N.L."/>
            <person name="Richter J."/>
            <person name="Russo S."/>
            <person name="Schroeder A.J."/>
            <person name="Shu S.Q."/>
            <person name="Stapleton M."/>
            <person name="Yamada C."/>
            <person name="Ashburner M."/>
            <person name="Gelbart W.M."/>
            <person name="Rubin G.M."/>
            <person name="Lewis S.E."/>
        </authorList>
    </citation>
    <scope>GENOME REANNOTATION</scope>
    <source>
        <strain>Berkeley</strain>
    </source>
</reference>
<reference evidence="12" key="4">
    <citation type="submission" date="2003-08" db="EMBL/GenBank/DDBJ databases">
        <authorList>
            <person name="Stapleton M."/>
            <person name="Brokstein P."/>
            <person name="Hong L."/>
            <person name="Agbayani A."/>
            <person name="Carlson J."/>
            <person name="Champe M."/>
            <person name="Chavez C."/>
            <person name="Dorsett V."/>
            <person name="Dresnek D."/>
            <person name="Farfan D."/>
            <person name="Frise E."/>
            <person name="George R."/>
            <person name="Gonzalez M."/>
            <person name="Guarin H."/>
            <person name="Kronmiller B."/>
            <person name="Li P."/>
            <person name="Liao G."/>
            <person name="Miranda A."/>
            <person name="Mungall C.J."/>
            <person name="Nunoo J."/>
            <person name="Pacleb J."/>
            <person name="Paragas V."/>
            <person name="Park S."/>
            <person name="Patel S."/>
            <person name="Phouanenavong S."/>
            <person name="Wan K."/>
            <person name="Yu C."/>
            <person name="Lewis S.E."/>
            <person name="Rubin G.M."/>
            <person name="Celniker S."/>
        </authorList>
    </citation>
    <scope>NUCLEOTIDE SEQUENCE [LARGE SCALE MRNA]</scope>
    <source>
        <strain evidence="12">Berkeley</strain>
        <tissue>Embryo</tissue>
    </source>
</reference>
<reference evidence="9" key="5">
    <citation type="journal article" date="1998" name="Development">
        <title>The PS2 integrin ligand tiggrin is required for proper muscle function in Drosophila.</title>
        <authorList>
            <person name="Bunch T.A."/>
            <person name="Graner M.W."/>
            <person name="Fessler L.I."/>
            <person name="Fessler J.H."/>
            <person name="Schneider K.D."/>
            <person name="Kerschen A."/>
            <person name="Choy L.P."/>
            <person name="Burgess B.W."/>
            <person name="Brower D.L."/>
        </authorList>
    </citation>
    <scope>FUNCTION</scope>
    <scope>TISSUE SPECIFICITY</scope>
    <scope>DISRUPTION PHENOTYPE</scope>
    <scope>MUTAGENESIS OF 1889-ARG--ASP-1991</scope>
</reference>
<reference evidence="9" key="6">
    <citation type="journal article" date="1998" name="J. Biol. Chem.">
        <title>Splice variants of the Drosophila PS2 integrins differentially interact with RGD-containing fragments of the extracellular proteins tiggrin, ten-m, and D-laminin 2.</title>
        <authorList>
            <person name="Graner M.W."/>
            <person name="Bunch T.A."/>
            <person name="Baumgartner S."/>
            <person name="Kerschen A."/>
            <person name="Brower D.L."/>
        </authorList>
    </citation>
    <scope>FUNCTION</scope>
</reference>
<reference evidence="9" key="7">
    <citation type="journal article" date="2000" name="J. Cell Sci.">
        <title>The localized assembly of extracellular matrix integrin ligands requires cell-cell contact.</title>
        <authorList>
            <person name="Martin-Bermudo M.D."/>
            <person name="Brown N.H."/>
        </authorList>
    </citation>
    <scope>TISSUE SPECIFICITY</scope>
    <scope>DISRUPTION PHENOTYPE</scope>
</reference>
<reference evidence="9" key="8">
    <citation type="journal article" date="2008" name="J. Biol. Chem.">
        <title>A mucin-type O-glycosyltransferase modulates cell adhesion during Drosophila development.</title>
        <authorList>
            <person name="Zhang L."/>
            <person name="Zhang Y."/>
            <person name="Hagen K.G."/>
        </authorList>
    </citation>
    <scope>FUNCTION</scope>
    <scope>TISSUE SPECIFICITY</scope>
    <scope>GLYCOSYLATION BY PGANT3</scope>
</reference>
<reference evidence="9" key="9">
    <citation type="journal article" date="2010" name="J. Biol. Chem.">
        <title>An O-glycosyltransferase promotes cell adhesion during development by influencing secretion of an extracellular matrix integrin ligand.</title>
        <authorList>
            <person name="Zhang L."/>
            <person name="Tran D.T."/>
            <person name="Ten Hagen K.G."/>
        </authorList>
    </citation>
    <scope>SUBCELLULAR LOCATION</scope>
    <scope>TISSUE SPECIFICITY</scope>
    <scope>DEVELOPMENTAL STAGE</scope>
    <scope>GLYCOSYLATION BY PGANT3</scope>
</reference>
<keyword id="KW-0175">Coiled coil</keyword>
<keyword id="KW-0217">Developmental protein</keyword>
<keyword id="KW-0903">Direct protein sequencing</keyword>
<keyword id="KW-0272">Extracellular matrix</keyword>
<keyword id="KW-1185">Reference proteome</keyword>
<keyword id="KW-0964">Secreted</keyword>
<keyword id="KW-0732">Signal</keyword>
<accession>Q9VMD9</accession>
<accession>Q23984</accession>
<accession>Q6NR23</accession>
<organism>
    <name type="scientific">Drosophila melanogaster</name>
    <name type="common">Fruit fly</name>
    <dbReference type="NCBI Taxonomy" id="7227"/>
    <lineage>
        <taxon>Eukaryota</taxon>
        <taxon>Metazoa</taxon>
        <taxon>Ecdysozoa</taxon>
        <taxon>Arthropoda</taxon>
        <taxon>Hexapoda</taxon>
        <taxon>Insecta</taxon>
        <taxon>Pterygota</taxon>
        <taxon>Neoptera</taxon>
        <taxon>Endopterygota</taxon>
        <taxon>Diptera</taxon>
        <taxon>Brachycera</taxon>
        <taxon>Muscomorpha</taxon>
        <taxon>Ephydroidea</taxon>
        <taxon>Drosophilidae</taxon>
        <taxon>Drosophila</taxon>
        <taxon>Sophophora</taxon>
    </lineage>
</organism>
<name>TIG_DROME</name>
<gene>
    <name evidence="11 13" type="primary">Tig</name>
    <name type="ORF">CG11527</name>
</gene>
<sequence length="2188" mass="257446">MRALGGITLLLAVAICQGYETYQRSSFRSSSSSSYGGGQTVPQLNSFASAHFNEVRELANQLKQKFNVLSQGSTNFAYTSPWSASILDLSGKSTLQLDQLSSEISRQLVQDMREGITNYHTIAQPNFFEAKAAELLERYSGAESASLQQTVGLGPYQPVDLSGFDEVKNYAYPAEVKVIDGKTYVVHRNCTEATKLSDYGSSGQLNSGFLGHQQTSLPLSSTTTTITRKKTIHDWVRENMEPSVVGYNSVVKLDGQLRNSALNQMVPLSPGSNVVIHRFNKTITTNPDGTSSVGGSEWQQRWQDGKLVYDHQQPFGQSTIPRDEQWKREERERLFWYLTTPQRLDDWQQQQEERLLGVVQRYQVSLPVLKEFHRRELARYEALLGQYQSRVQDTSSWQRQERGRLDWLIHQNGFTVQDIERWQNENARKLAEAARQHGISQNQLQQFQREELQRLYVHFNQVNESLAPQVPSVPQTTYNYQSSSSLTEDNTKEQQRLEELIRQHNATIAALQNSIKTDQQRLKNLSIKYQGDMQSQTQWLRGEVARIGDLIKEQNEQVSKITAWQSSERSRLENILLQHRGSVEEVQQRINMDRNYLQNLATKYQVSVEELEKWQKEELERLQVRGQQQLEEHIKDWQISVSSNLRDIATQNKLTIDEFQNYIINDRSHLEEMARLYKVKVEEIEQWIKSELKKFQSEGLLKGVEQELIQWQQKERERLQAIVQQNSLTVEQLEVRIKNDQDHFFKLADKYKINVEDIQDWLKKELLRLQSEGLVKAETLKEWQQQERAQISLLVQQNKYSLDEFERKMLADRARLQELSNTYNVKVSEIEQWIKSEGDRLQHEGQLRMESQLNNWQKIERQRLLDLINKNNLSIEEIESKISKDQTHLYSLAQQHQVRVEEIEQWIRQQIQKLQDQGLIEMQKLKNWQLEWRGNLTNMVQDRDFTVEEFHKWLLKDREQLQSLAMQHNVQIEEIEQFVKKEEQRFIGMGLLKPSEKLTNWQEVERLHLKNLAQQQYKSTEQLEARLRQDRELLERLARQYSVQVEEIESWMKQELARMRDEGQLQIDNLTSWQLAERERLEALIKQNKQWSAEELRAELEKDREHMQTMAFQYHTSVEEIEKWLQSEIERLKQQGKLNIEQLTAWQRTEQQRILSLLQQHSNITLEQFQAKVHNDRRFLMNLAEQHHVHIEEVDNYVKQVIEDLRKNGQFEIEQLQTWQRVERDYIKSLISEYKNSLSTAEYEEKLLADRAHLKHLADQYRINVEQIEEWMIAELKRLRGSTEETLKSLSAWQVSELERLQNLVKQQNHLTFVEFEMELNQERDRLQKLANQYSVNVVEIEEWLRQQLINLRTTGQAKVENLSKWQVEEQQRLIEMLLKKQQEMPYEQVERELTQDHARLQSLSQTHHVDIDHVDHWLREELRRLQSSGLVQIEQQTQWQQKISNGFNNWLEQQRNGASYQDFVDFLKRDKQRMDGIATDYHVTVEQVEKWVQKEAARLSLIGVIERPENNLKYEDISNIWVGDQTDSWKNELVTRLRSVTRQRPFTRQEFESYLIRNKPIFEQIARQYHVTIEDIHLWLDQSAKNEGLVTTEWQAKERLHIDNLINQQLRKQQRWTIEELELRLNNDQKHLQDAVAQYHVTVEELKVWYKDELNRLLEQRRIDRGSGISWQNIESQRIYLAIVNNPGISRQALENRLFRDVHVRASQYQITVEELRQFILSQLRRFSDMGLIVDNGRQANNWHDQERKRLREVVKGVVITEQELLDFISQDTSFQTQLAQSYQVGLEQLAPVQRIFIGNLAREQLLEQRRLNHLTTWQQRERDRLYEFIGNQNMTQTELKTWQIQDSKLLAEFAKRYEISVQQLSDWQKKELARINQLARYYGMSQSDLQQFREGELRQLAYINHRQLLSAAEAQKWEKRHQWTLSRLQSRYGKFGQELVAWRRTLYLLSQGLIDLPADSGSNGGYVVDAGSTNATAVYKPIFSKDRGDQPPHTYDESFVEGDEPGLEGETARPRPPNPAPIVSTPKPPLPYSRGGPSGGFEYRRQDYTFNVPVGSASASASGGPTGSSASASASLGKWNRASGDEPLQQEVDLGQQQQIEELGWNEKLEDLGQQTQVEDTDWNQQAEDLGQQQQVQVEDDLHFDQTQGHSSSSNSRSQPLQQATKVEVEATSEPSFWEKLKEKLG</sequence>
<protein>
    <recommendedName>
        <fullName evidence="11">Tiggrin</fullName>
    </recommendedName>
</protein>